<name>RBCC1_MOUSE</name>
<evidence type="ECO:0000250" key="1">
    <source>
        <dbReference type="UniProtKB" id="Q8TDY2"/>
    </source>
</evidence>
<evidence type="ECO:0000255" key="2"/>
<evidence type="ECO:0000256" key="3">
    <source>
        <dbReference type="SAM" id="MobiDB-lite"/>
    </source>
</evidence>
<evidence type="ECO:0000269" key="4">
    <source>
    </source>
</evidence>
<evidence type="ECO:0000269" key="5">
    <source>
    </source>
</evidence>
<evidence type="ECO:0000269" key="6">
    <source>
    </source>
</evidence>
<evidence type="ECO:0000269" key="7">
    <source>
    </source>
</evidence>
<evidence type="ECO:0000269" key="8">
    <source>
    </source>
</evidence>
<evidence type="ECO:0000269" key="9">
    <source>
    </source>
</evidence>
<evidence type="ECO:0000269" key="10">
    <source>
    </source>
</evidence>
<evidence type="ECO:0000269" key="11">
    <source>
    </source>
</evidence>
<evidence type="ECO:0000269" key="12">
    <source>
    </source>
</evidence>
<evidence type="ECO:0000269" key="13">
    <source>
    </source>
</evidence>
<evidence type="ECO:0000269" key="14">
    <source>
    </source>
</evidence>
<evidence type="ECO:0000269" key="15">
    <source>
    </source>
</evidence>
<evidence type="ECO:0000269" key="16">
    <source>
    </source>
</evidence>
<evidence type="ECO:0000305" key="17"/>
<evidence type="ECO:0000312" key="18">
    <source>
        <dbReference type="MGI" id="MGI:1341850"/>
    </source>
</evidence>
<evidence type="ECO:0007744" key="19">
    <source>
    </source>
</evidence>
<dbReference type="EMBL" id="AB050017">
    <property type="protein sequence ID" value="BAB16846.2"/>
    <property type="molecule type" value="mRNA"/>
</dbReference>
<dbReference type="EMBL" id="AB070619">
    <property type="protein sequence ID" value="BAB85610.1"/>
    <property type="molecule type" value="mRNA"/>
</dbReference>
<dbReference type="EMBL" id="AC102781">
    <property type="status" value="NOT_ANNOTATED_CDS"/>
    <property type="molecule type" value="Genomic_DNA"/>
</dbReference>
<dbReference type="EMBL" id="AC139064">
    <property type="status" value="NOT_ANNOTATED_CDS"/>
    <property type="molecule type" value="Genomic_DNA"/>
</dbReference>
<dbReference type="EMBL" id="AK041038">
    <property type="protein sequence ID" value="BAC30793.1"/>
    <property type="status" value="ALT_INIT"/>
    <property type="molecule type" value="mRNA"/>
</dbReference>
<dbReference type="EMBL" id="AK159066">
    <property type="protein sequence ID" value="BAE34792.1"/>
    <property type="molecule type" value="mRNA"/>
</dbReference>
<dbReference type="EMBL" id="X82318">
    <property type="protein sequence ID" value="CAA57761.1"/>
    <property type="molecule type" value="mRNA"/>
</dbReference>
<dbReference type="EMBL" id="AJ242720">
    <property type="protein sequence ID" value="CAB92238.1"/>
    <property type="molecule type" value="mRNA"/>
</dbReference>
<dbReference type="CCDS" id="CCDS35507.1"/>
<dbReference type="PIR" id="I48282">
    <property type="entry name" value="I48282"/>
</dbReference>
<dbReference type="RefSeq" id="NP_033956.2">
    <property type="nucleotide sequence ID" value="NM_009826.4"/>
</dbReference>
<dbReference type="RefSeq" id="XP_036012163.1">
    <property type="nucleotide sequence ID" value="XM_036156270.1"/>
</dbReference>
<dbReference type="SMR" id="Q9ESK9"/>
<dbReference type="BioGRID" id="198540">
    <property type="interactions" value="67"/>
</dbReference>
<dbReference type="ComplexPortal" id="CPX-380">
    <property type="entry name" value="ULK1-ATG13-RB1CC1-ATG101 autophagy initiation complex"/>
</dbReference>
<dbReference type="DIP" id="DIP-49679N"/>
<dbReference type="FunCoup" id="Q9ESK9">
    <property type="interactions" value="4085"/>
</dbReference>
<dbReference type="IntAct" id="Q9ESK9">
    <property type="interactions" value="7"/>
</dbReference>
<dbReference type="MINT" id="Q9ESK9"/>
<dbReference type="STRING" id="10090.ENSMUSP00000027040"/>
<dbReference type="GlyGen" id="Q9ESK9">
    <property type="glycosylation" value="3 sites, 1 N-linked glycan (1 site), 1 O-linked glycan (2 sites)"/>
</dbReference>
<dbReference type="iPTMnet" id="Q9ESK9"/>
<dbReference type="PhosphoSitePlus" id="Q9ESK9"/>
<dbReference type="jPOST" id="Q9ESK9"/>
<dbReference type="PaxDb" id="10090-ENSMUSP00000027040"/>
<dbReference type="PeptideAtlas" id="Q9ESK9"/>
<dbReference type="ProteomicsDB" id="253180"/>
<dbReference type="Pumba" id="Q9ESK9"/>
<dbReference type="Antibodypedia" id="24432">
    <property type="antibodies" value="307 antibodies from 30 providers"/>
</dbReference>
<dbReference type="DNASU" id="12421"/>
<dbReference type="Ensembl" id="ENSMUST00000027040.13">
    <property type="protein sequence ID" value="ENSMUSP00000027040.7"/>
    <property type="gene ID" value="ENSMUSG00000025907.15"/>
</dbReference>
<dbReference type="GeneID" id="12421"/>
<dbReference type="KEGG" id="mmu:12421"/>
<dbReference type="UCSC" id="uc007afr.2">
    <property type="organism name" value="mouse"/>
</dbReference>
<dbReference type="AGR" id="MGI:1341850"/>
<dbReference type="CTD" id="9821"/>
<dbReference type="MGI" id="MGI:1341850">
    <property type="gene designation" value="Rb1cc1"/>
</dbReference>
<dbReference type="VEuPathDB" id="HostDB:ENSMUSG00000025907"/>
<dbReference type="eggNOG" id="KOG4572">
    <property type="taxonomic scope" value="Eukaryota"/>
</dbReference>
<dbReference type="GeneTree" id="ENSGT00390000015871"/>
<dbReference type="HOGENOM" id="CLU_003711_0_0_1"/>
<dbReference type="InParanoid" id="Q9ESK9"/>
<dbReference type="OMA" id="LMHTQNC"/>
<dbReference type="OrthoDB" id="447953at2759"/>
<dbReference type="PhylomeDB" id="Q9ESK9"/>
<dbReference type="TreeFam" id="TF323750"/>
<dbReference type="Reactome" id="R-MMU-1632852">
    <property type="pathway name" value="Macroautophagy"/>
</dbReference>
<dbReference type="BioGRID-ORCS" id="12421">
    <property type="hits" value="26 hits in 82 CRISPR screens"/>
</dbReference>
<dbReference type="ChiTaRS" id="Rb1cc1">
    <property type="organism name" value="mouse"/>
</dbReference>
<dbReference type="PRO" id="PR:Q9ESK9"/>
<dbReference type="Proteomes" id="UP000000589">
    <property type="component" value="Chromosome 1"/>
</dbReference>
<dbReference type="RNAct" id="Q9ESK9">
    <property type="molecule type" value="protein"/>
</dbReference>
<dbReference type="Bgee" id="ENSMUSG00000025907">
    <property type="expression patterns" value="Expressed in spermatocyte and 257 other cell types or tissues"/>
</dbReference>
<dbReference type="ExpressionAtlas" id="Q9ESK9">
    <property type="expression patterns" value="baseline and differential"/>
</dbReference>
<dbReference type="GO" id="GO:1990316">
    <property type="term" value="C:Atg1/ULK1 kinase complex"/>
    <property type="evidence" value="ECO:0000314"/>
    <property type="project" value="MGI"/>
</dbReference>
<dbReference type="GO" id="GO:0000421">
    <property type="term" value="C:autophagosome membrane"/>
    <property type="evidence" value="ECO:0000314"/>
    <property type="project" value="MGI"/>
</dbReference>
<dbReference type="GO" id="GO:0005737">
    <property type="term" value="C:cytoplasm"/>
    <property type="evidence" value="ECO:0000250"/>
    <property type="project" value="MGI"/>
</dbReference>
<dbReference type="GO" id="GO:0005829">
    <property type="term" value="C:cytosol"/>
    <property type="evidence" value="ECO:0007669"/>
    <property type="project" value="UniProtKB-SubCell"/>
</dbReference>
<dbReference type="GO" id="GO:0005764">
    <property type="term" value="C:lysosome"/>
    <property type="evidence" value="ECO:0000250"/>
    <property type="project" value="UniProtKB"/>
</dbReference>
<dbReference type="GO" id="GO:0031965">
    <property type="term" value="C:nuclear membrane"/>
    <property type="evidence" value="ECO:0007669"/>
    <property type="project" value="Ensembl"/>
</dbReference>
<dbReference type="GO" id="GO:0005634">
    <property type="term" value="C:nucleus"/>
    <property type="evidence" value="ECO:0000314"/>
    <property type="project" value="MGI"/>
</dbReference>
<dbReference type="GO" id="GO:0000407">
    <property type="term" value="C:phagophore assembly site"/>
    <property type="evidence" value="ECO:0000314"/>
    <property type="project" value="UniProtKB"/>
</dbReference>
<dbReference type="GO" id="GO:0034045">
    <property type="term" value="C:phagophore assembly site membrane"/>
    <property type="evidence" value="ECO:0000314"/>
    <property type="project" value="UniProtKB"/>
</dbReference>
<dbReference type="GO" id="GO:0019901">
    <property type="term" value="F:protein kinase binding"/>
    <property type="evidence" value="ECO:0000353"/>
    <property type="project" value="UniProtKB"/>
</dbReference>
<dbReference type="GO" id="GO:0006915">
    <property type="term" value="P:apoptotic process"/>
    <property type="evidence" value="ECO:0000315"/>
    <property type="project" value="MGI"/>
</dbReference>
<dbReference type="GO" id="GO:0000045">
    <property type="term" value="P:autophagosome assembly"/>
    <property type="evidence" value="ECO:0000314"/>
    <property type="project" value="ComplexPortal"/>
</dbReference>
<dbReference type="GO" id="GO:0006914">
    <property type="term" value="P:autophagy"/>
    <property type="evidence" value="ECO:0000315"/>
    <property type="project" value="GO_Central"/>
</dbReference>
<dbReference type="GO" id="GO:0051607">
    <property type="term" value="P:defense response to virus"/>
    <property type="evidence" value="ECO:0000315"/>
    <property type="project" value="MGI"/>
</dbReference>
<dbReference type="GO" id="GO:0097191">
    <property type="term" value="P:extrinsic apoptotic signaling pathway"/>
    <property type="evidence" value="ECO:0000315"/>
    <property type="project" value="MGI"/>
</dbReference>
<dbReference type="GO" id="GO:0007507">
    <property type="term" value="P:heart development"/>
    <property type="evidence" value="ECO:0000315"/>
    <property type="project" value="MGI"/>
</dbReference>
<dbReference type="GO" id="GO:0045087">
    <property type="term" value="P:innate immune response"/>
    <property type="evidence" value="ECO:0000315"/>
    <property type="project" value="MGI"/>
</dbReference>
<dbReference type="GO" id="GO:0001889">
    <property type="term" value="P:liver development"/>
    <property type="evidence" value="ECO:0000315"/>
    <property type="project" value="MGI"/>
</dbReference>
<dbReference type="GO" id="GO:0043066">
    <property type="term" value="P:negative regulation of apoptotic process"/>
    <property type="evidence" value="ECO:0000315"/>
    <property type="project" value="MGI"/>
</dbReference>
<dbReference type="GO" id="GO:0008285">
    <property type="term" value="P:negative regulation of cell population proliferation"/>
    <property type="evidence" value="ECO:0000314"/>
    <property type="project" value="ComplexPortal"/>
</dbReference>
<dbReference type="GO" id="GO:2001237">
    <property type="term" value="P:negative regulation of extrinsic apoptotic signaling pathway"/>
    <property type="evidence" value="ECO:0000315"/>
    <property type="project" value="MGI"/>
</dbReference>
<dbReference type="GO" id="GO:0010508">
    <property type="term" value="P:positive regulation of autophagy"/>
    <property type="evidence" value="ECO:0000314"/>
    <property type="project" value="ComplexPortal"/>
</dbReference>
<dbReference type="GO" id="GO:0045793">
    <property type="term" value="P:positive regulation of cell size"/>
    <property type="evidence" value="ECO:0000315"/>
    <property type="project" value="MGI"/>
</dbReference>
<dbReference type="GO" id="GO:0046330">
    <property type="term" value="P:positive regulation of JNK cascade"/>
    <property type="evidence" value="ECO:0000316"/>
    <property type="project" value="MGI"/>
</dbReference>
<dbReference type="GO" id="GO:0061709">
    <property type="term" value="P:reticulophagy"/>
    <property type="evidence" value="ECO:0000315"/>
    <property type="project" value="MGI"/>
</dbReference>
<dbReference type="CDD" id="cd17060">
    <property type="entry name" value="Ubl_RB1CC1"/>
    <property type="match status" value="1"/>
</dbReference>
<dbReference type="FunFam" id="3.10.20.90:FF:000049">
    <property type="entry name" value="RB1-inducible coiled-coil protein 1 isoform X1"/>
    <property type="match status" value="1"/>
</dbReference>
<dbReference type="Gene3D" id="3.10.20.90">
    <property type="entry name" value="Phosphatidylinositol 3-kinase Catalytic Subunit, Chain A, domain 1"/>
    <property type="match status" value="1"/>
</dbReference>
<dbReference type="InterPro" id="IPR040040">
    <property type="entry name" value="ATG11"/>
</dbReference>
<dbReference type="InterPro" id="IPR019460">
    <property type="entry name" value="Atg11_C"/>
</dbReference>
<dbReference type="PANTHER" id="PTHR13222">
    <property type="entry name" value="RB1-INDUCIBLE COILED-COIL"/>
    <property type="match status" value="1"/>
</dbReference>
<dbReference type="PANTHER" id="PTHR13222:SF1">
    <property type="entry name" value="RB1-INDUCIBLE COILED-COIL PROTEIN 1"/>
    <property type="match status" value="1"/>
</dbReference>
<dbReference type="Pfam" id="PF10377">
    <property type="entry name" value="ATG11"/>
    <property type="match status" value="1"/>
</dbReference>
<accession>Q9ESK9</accession>
<accession>E9QLQ2</accession>
<accession>Q3TXX2</accession>
<accession>Q61384</accession>
<accession>Q8BRY9</accession>
<accession>Q9JK14</accession>
<feature type="chain" id="PRO_0000097184" description="RB1-inducible coiled-coil protein 1">
    <location>
        <begin position="1"/>
        <end position="1588"/>
    </location>
</feature>
<feature type="region of interest" description="Disordered" evidence="3">
    <location>
        <begin position="638"/>
        <end position="674"/>
    </location>
</feature>
<feature type="coiled-coil region" evidence="2">
    <location>
        <begin position="858"/>
        <end position="1393"/>
    </location>
</feature>
<feature type="coiled-coil region" evidence="2">
    <location>
        <begin position="1440"/>
        <end position="1479"/>
    </location>
</feature>
<feature type="short sequence motif" description="Nuclear localization signal">
    <location>
        <begin position="565"/>
        <end position="568"/>
    </location>
</feature>
<feature type="short sequence motif" description="FFAT" evidence="1">
    <location>
        <begin position="730"/>
        <end position="736"/>
    </location>
</feature>
<feature type="compositionally biased region" description="Low complexity" evidence="3">
    <location>
        <begin position="643"/>
        <end position="667"/>
    </location>
</feature>
<feature type="modified residue" description="Phosphoserine" evidence="1">
    <location>
        <position position="222"/>
    </location>
</feature>
<feature type="modified residue" description="Phosphoserine" evidence="1">
    <location>
        <position position="229"/>
    </location>
</feature>
<feature type="modified residue" description="Phosphoserine" evidence="19">
    <location>
        <position position="237"/>
    </location>
</feature>
<feature type="modified residue" description="Phosphothreonine" evidence="19">
    <location>
        <position position="238"/>
    </location>
</feature>
<feature type="modified residue" description="Phosphoserine" evidence="19">
    <location>
        <position position="243"/>
    </location>
</feature>
<feature type="modified residue" description="Phosphoserine" evidence="1">
    <location>
        <position position="253"/>
    </location>
</feature>
<feature type="modified residue" description="Phosphoserine" evidence="1">
    <location>
        <position position="257"/>
    </location>
</feature>
<feature type="modified residue" description="Phosphoserine" evidence="19">
    <location>
        <position position="261"/>
    </location>
</feature>
<feature type="modified residue" description="Phosphoserine" evidence="19">
    <location>
        <position position="623"/>
    </location>
</feature>
<feature type="modified residue" description="Phosphoserine" evidence="19">
    <location>
        <position position="646"/>
    </location>
</feature>
<feature type="modified residue" description="Phosphoserine" evidence="19">
    <location>
        <position position="649"/>
    </location>
</feature>
<feature type="modified residue" description="Phosphoserine" evidence="19">
    <location>
        <position position="652"/>
    </location>
</feature>
<feature type="modified residue" description="Phosphoserine" evidence="1">
    <location>
        <position position="733"/>
    </location>
</feature>
<feature type="modified residue" description="Phosphoserine" evidence="19">
    <location>
        <position position="1087"/>
    </location>
</feature>
<feature type="modified residue" description="Phosphoserine" evidence="1">
    <location>
        <position position="1366"/>
    </location>
</feature>
<feature type="modified residue" description="Phosphoserine" evidence="1">
    <location>
        <position position="1478"/>
    </location>
</feature>
<feature type="sequence conflict" description="In Ref. 1; BAB16846/BAB85610." evidence="17" ref="1">
    <original>S</original>
    <variation>T</variation>
    <location>
        <position position="809"/>
    </location>
</feature>
<feature type="sequence conflict" description="In Ref. 1; BAB16846/BAB85610." evidence="17" ref="1">
    <original>Q</original>
    <variation>E</variation>
    <location>
        <position position="981"/>
    </location>
</feature>
<feature type="sequence conflict" description="In Ref. 4; CAA57761." evidence="17" ref="4">
    <original>D</original>
    <variation>A</variation>
    <location>
        <position position="1222"/>
    </location>
</feature>
<feature type="sequence conflict" description="In Ref. 5; CAB92238." evidence="17" ref="5">
    <original>KQ</original>
    <variation>NE</variation>
    <location>
        <begin position="1450"/>
        <end position="1451"/>
    </location>
</feature>
<feature type="sequence conflict" description="In Ref. 5; CAB92238." evidence="17" ref="5">
    <location>
        <begin position="1537"/>
        <end position="1539"/>
    </location>
</feature>
<gene>
    <name evidence="18" type="primary">Rb1cc1</name>
    <name type="synonym">Cc1</name>
    <name type="synonym">Kiaa0203</name>
</gene>
<reference key="1">
    <citation type="journal article" date="2002" name="Gene">
        <title>Isolation, characterization and mapping of the mouse and human RB1CC1 genes.</title>
        <authorList>
            <person name="Chano T."/>
            <person name="Ikegawa S."/>
            <person name="Saito-Ohara F."/>
            <person name="Inazawa J."/>
            <person name="Mabuchi A."/>
            <person name="Saeki Y."/>
            <person name="Okabe H."/>
        </authorList>
    </citation>
    <scope>NUCLEOTIDE SEQUENCE [MRNA]</scope>
    <scope>TISSUE SPECIFICITY</scope>
    <scope>SUBCELLULAR LOCATION</scope>
    <scope>COLOCALIZATION WITH RB1</scope>
    <scope>FUNCTION</scope>
    <source>
        <strain>C57BL/6J</strain>
        <tissue>Skeletal muscle</tissue>
    </source>
</reference>
<reference key="2">
    <citation type="journal article" date="2009" name="PLoS Biol.">
        <title>Lineage-specific biology revealed by a finished genome assembly of the mouse.</title>
        <authorList>
            <person name="Church D.M."/>
            <person name="Goodstadt L."/>
            <person name="Hillier L.W."/>
            <person name="Zody M.C."/>
            <person name="Goldstein S."/>
            <person name="She X."/>
            <person name="Bult C.J."/>
            <person name="Agarwala R."/>
            <person name="Cherry J.L."/>
            <person name="DiCuccio M."/>
            <person name="Hlavina W."/>
            <person name="Kapustin Y."/>
            <person name="Meric P."/>
            <person name="Maglott D."/>
            <person name="Birtle Z."/>
            <person name="Marques A.C."/>
            <person name="Graves T."/>
            <person name="Zhou S."/>
            <person name="Teague B."/>
            <person name="Potamousis K."/>
            <person name="Churas C."/>
            <person name="Place M."/>
            <person name="Herschleb J."/>
            <person name="Runnheim R."/>
            <person name="Forrest D."/>
            <person name="Amos-Landgraf J."/>
            <person name="Schwartz D.C."/>
            <person name="Cheng Z."/>
            <person name="Lindblad-Toh K."/>
            <person name="Eichler E.E."/>
            <person name="Ponting C.P."/>
        </authorList>
    </citation>
    <scope>NUCLEOTIDE SEQUENCE [LARGE SCALE GENOMIC DNA]</scope>
    <source>
        <strain>C57BL/6J</strain>
    </source>
</reference>
<reference key="3">
    <citation type="journal article" date="2005" name="Science">
        <title>The transcriptional landscape of the mammalian genome.</title>
        <authorList>
            <person name="Carninci P."/>
            <person name="Kasukawa T."/>
            <person name="Katayama S."/>
            <person name="Gough J."/>
            <person name="Frith M.C."/>
            <person name="Maeda N."/>
            <person name="Oyama R."/>
            <person name="Ravasi T."/>
            <person name="Lenhard B."/>
            <person name="Wells C."/>
            <person name="Kodzius R."/>
            <person name="Shimokawa K."/>
            <person name="Bajic V.B."/>
            <person name="Brenner S.E."/>
            <person name="Batalov S."/>
            <person name="Forrest A.R."/>
            <person name="Zavolan M."/>
            <person name="Davis M.J."/>
            <person name="Wilming L.G."/>
            <person name="Aidinis V."/>
            <person name="Allen J.E."/>
            <person name="Ambesi-Impiombato A."/>
            <person name="Apweiler R."/>
            <person name="Aturaliya R.N."/>
            <person name="Bailey T.L."/>
            <person name="Bansal M."/>
            <person name="Baxter L."/>
            <person name="Beisel K.W."/>
            <person name="Bersano T."/>
            <person name="Bono H."/>
            <person name="Chalk A.M."/>
            <person name="Chiu K.P."/>
            <person name="Choudhary V."/>
            <person name="Christoffels A."/>
            <person name="Clutterbuck D.R."/>
            <person name="Crowe M.L."/>
            <person name="Dalla E."/>
            <person name="Dalrymple B.P."/>
            <person name="de Bono B."/>
            <person name="Della Gatta G."/>
            <person name="di Bernardo D."/>
            <person name="Down T."/>
            <person name="Engstrom P."/>
            <person name="Fagiolini M."/>
            <person name="Faulkner G."/>
            <person name="Fletcher C.F."/>
            <person name="Fukushima T."/>
            <person name="Furuno M."/>
            <person name="Futaki S."/>
            <person name="Gariboldi M."/>
            <person name="Georgii-Hemming P."/>
            <person name="Gingeras T.R."/>
            <person name="Gojobori T."/>
            <person name="Green R.E."/>
            <person name="Gustincich S."/>
            <person name="Harbers M."/>
            <person name="Hayashi Y."/>
            <person name="Hensch T.K."/>
            <person name="Hirokawa N."/>
            <person name="Hill D."/>
            <person name="Huminiecki L."/>
            <person name="Iacono M."/>
            <person name="Ikeo K."/>
            <person name="Iwama A."/>
            <person name="Ishikawa T."/>
            <person name="Jakt M."/>
            <person name="Kanapin A."/>
            <person name="Katoh M."/>
            <person name="Kawasawa Y."/>
            <person name="Kelso J."/>
            <person name="Kitamura H."/>
            <person name="Kitano H."/>
            <person name="Kollias G."/>
            <person name="Krishnan S.P."/>
            <person name="Kruger A."/>
            <person name="Kummerfeld S.K."/>
            <person name="Kurochkin I.V."/>
            <person name="Lareau L.F."/>
            <person name="Lazarevic D."/>
            <person name="Lipovich L."/>
            <person name="Liu J."/>
            <person name="Liuni S."/>
            <person name="McWilliam S."/>
            <person name="Madan Babu M."/>
            <person name="Madera M."/>
            <person name="Marchionni L."/>
            <person name="Matsuda H."/>
            <person name="Matsuzawa S."/>
            <person name="Miki H."/>
            <person name="Mignone F."/>
            <person name="Miyake S."/>
            <person name="Morris K."/>
            <person name="Mottagui-Tabar S."/>
            <person name="Mulder N."/>
            <person name="Nakano N."/>
            <person name="Nakauchi H."/>
            <person name="Ng P."/>
            <person name="Nilsson R."/>
            <person name="Nishiguchi S."/>
            <person name="Nishikawa S."/>
            <person name="Nori F."/>
            <person name="Ohara O."/>
            <person name="Okazaki Y."/>
            <person name="Orlando V."/>
            <person name="Pang K.C."/>
            <person name="Pavan W.J."/>
            <person name="Pavesi G."/>
            <person name="Pesole G."/>
            <person name="Petrovsky N."/>
            <person name="Piazza S."/>
            <person name="Reed J."/>
            <person name="Reid J.F."/>
            <person name="Ring B.Z."/>
            <person name="Ringwald M."/>
            <person name="Rost B."/>
            <person name="Ruan Y."/>
            <person name="Salzberg S.L."/>
            <person name="Sandelin A."/>
            <person name="Schneider C."/>
            <person name="Schoenbach C."/>
            <person name="Sekiguchi K."/>
            <person name="Semple C.A."/>
            <person name="Seno S."/>
            <person name="Sessa L."/>
            <person name="Sheng Y."/>
            <person name="Shibata Y."/>
            <person name="Shimada H."/>
            <person name="Shimada K."/>
            <person name="Silva D."/>
            <person name="Sinclair B."/>
            <person name="Sperling S."/>
            <person name="Stupka E."/>
            <person name="Sugiura K."/>
            <person name="Sultana R."/>
            <person name="Takenaka Y."/>
            <person name="Taki K."/>
            <person name="Tammoja K."/>
            <person name="Tan S.L."/>
            <person name="Tang S."/>
            <person name="Taylor M.S."/>
            <person name="Tegner J."/>
            <person name="Teichmann S.A."/>
            <person name="Ueda H.R."/>
            <person name="van Nimwegen E."/>
            <person name="Verardo R."/>
            <person name="Wei C.L."/>
            <person name="Yagi K."/>
            <person name="Yamanishi H."/>
            <person name="Zabarovsky E."/>
            <person name="Zhu S."/>
            <person name="Zimmer A."/>
            <person name="Hide W."/>
            <person name="Bult C."/>
            <person name="Grimmond S.M."/>
            <person name="Teasdale R.D."/>
            <person name="Liu E.T."/>
            <person name="Brusic V."/>
            <person name="Quackenbush J."/>
            <person name="Wahlestedt C."/>
            <person name="Mattick J.S."/>
            <person name="Hume D.A."/>
            <person name="Kai C."/>
            <person name="Sasaki D."/>
            <person name="Tomaru Y."/>
            <person name="Fukuda S."/>
            <person name="Kanamori-Katayama M."/>
            <person name="Suzuki M."/>
            <person name="Aoki J."/>
            <person name="Arakawa T."/>
            <person name="Iida J."/>
            <person name="Imamura K."/>
            <person name="Itoh M."/>
            <person name="Kato T."/>
            <person name="Kawaji H."/>
            <person name="Kawagashira N."/>
            <person name="Kawashima T."/>
            <person name="Kojima M."/>
            <person name="Kondo S."/>
            <person name="Konno H."/>
            <person name="Nakano K."/>
            <person name="Ninomiya N."/>
            <person name="Nishio T."/>
            <person name="Okada M."/>
            <person name="Plessy C."/>
            <person name="Shibata K."/>
            <person name="Shiraki T."/>
            <person name="Suzuki S."/>
            <person name="Tagami M."/>
            <person name="Waki K."/>
            <person name="Watahiki A."/>
            <person name="Okamura-Oho Y."/>
            <person name="Suzuki H."/>
            <person name="Kawai J."/>
            <person name="Hayashizaki Y."/>
        </authorList>
    </citation>
    <scope>NUCLEOTIDE SEQUENCE [LARGE SCALE MRNA] OF 589-1304 AND 1374-1588</scope>
    <source>
        <strain>C57BL/6J</strain>
        <tissue>Aorta</tissue>
        <tissue>Vein</tissue>
    </source>
</reference>
<reference key="4">
    <citation type="journal article" date="1995" name="Proc. Natl. Acad. Sci. U.S.A.">
        <title>Stathmin interaction with a putative kinase and coiled-coil-forming protein domains.</title>
        <authorList>
            <person name="Maucuer A."/>
            <person name="Camonis J.H."/>
            <person name="Sobel A."/>
        </authorList>
    </citation>
    <scope>NUCLEOTIDE SEQUENCE [MRNA] OF 1081-1222</scope>
</reference>
<reference key="5">
    <citation type="journal article" date="2000" name="Cell. Microbiol.">
        <title>LaXp180, a mammalian ActA-binding protein, identified with the yeast two-hybrid system co-localizes with intracellular Listeria monocytogenes.</title>
        <authorList>
            <person name="Pfeuffer T."/>
            <person name="Goebel W."/>
            <person name="Laubinger J."/>
            <person name="Bachmann M."/>
            <person name="Kuhn M."/>
        </authorList>
    </citation>
    <scope>NUCLEOTIDE SEQUENCE [MRNA] OF 1359-1588</scope>
    <source>
        <strain>CD-1</strain>
    </source>
</reference>
<reference key="6">
    <citation type="journal article" date="2004" name="Int. J. Mol. Med.">
        <title>Expression and regulation of RB1CC1 in developing murine and human tissues.</title>
        <authorList>
            <person name="Bamba N."/>
            <person name="Chano T."/>
            <person name="Taga T."/>
            <person name="Ohta S."/>
            <person name="Takeuchi Y."/>
            <person name="Okabe H."/>
        </authorList>
    </citation>
    <scope>DEVELOPMENTAL STAGE</scope>
</reference>
<reference key="7">
    <citation type="journal article" date="2005" name="Virchows Arch.">
        <title>Rb1cc1 is critical for myoblast differentiation through Rb1 regulation.</title>
        <authorList>
            <person name="Watanabe R."/>
            <person name="Chano T."/>
            <person name="Inoue H."/>
            <person name="Isono T."/>
            <person name="Koiwai O."/>
            <person name="Okabe H."/>
        </authorList>
    </citation>
    <scope>FUNCTION</scope>
</reference>
<reference key="8">
    <citation type="journal article" date="2006" name="Mol. Cell. Proteomics">
        <title>Comprehensive identification of phosphorylation sites in postsynaptic density preparations.</title>
        <authorList>
            <person name="Trinidad J.C."/>
            <person name="Specht C.G."/>
            <person name="Thalhammer A."/>
            <person name="Schoepfer R."/>
            <person name="Burlingame A.L."/>
        </authorList>
    </citation>
    <scope>IDENTIFICATION BY MASS SPECTROMETRY [LARGE SCALE ANALYSIS]</scope>
    <source>
        <tissue>Brain</tissue>
    </source>
</reference>
<reference key="9">
    <citation type="journal article" date="2007" name="Proc. Natl. Acad. Sci. U.S.A.">
        <title>Large-scale phosphorylation analysis of mouse liver.</title>
        <authorList>
            <person name="Villen J."/>
            <person name="Beausoleil S.A."/>
            <person name="Gerber S.A."/>
            <person name="Gygi S.P."/>
        </authorList>
    </citation>
    <scope>IDENTIFICATION BY MASS SPECTROMETRY [LARGE SCALE ANALYSIS]</scope>
    <source>
        <tissue>Liver</tissue>
    </source>
</reference>
<reference key="10">
    <citation type="journal article" date="2009" name="J. Biol. Chem.">
        <title>ULK1.ATG13.FIP200 complex mediates mTOR signaling and is essential for autophagy.</title>
        <authorList>
            <person name="Ganley I.G."/>
            <person name="Lam du H."/>
            <person name="Wang J."/>
            <person name="Ding X."/>
            <person name="Chen S."/>
            <person name="Jiang X."/>
        </authorList>
    </citation>
    <scope>FUNCTION</scope>
    <scope>INTERACTION WITH ULK1 AND ATG13</scope>
    <scope>SUBCELLULAR LOCATION</scope>
</reference>
<reference key="11">
    <citation type="journal article" date="2010" name="Cell">
        <title>A tissue-specific atlas of mouse protein phosphorylation and expression.</title>
        <authorList>
            <person name="Huttlin E.L."/>
            <person name="Jedrychowski M.P."/>
            <person name="Elias J.E."/>
            <person name="Goswami T."/>
            <person name="Rad R."/>
            <person name="Beausoleil S.A."/>
            <person name="Villen J."/>
            <person name="Haas W."/>
            <person name="Sowa M.E."/>
            <person name="Gygi S.P."/>
        </authorList>
    </citation>
    <scope>PHOSPHORYLATION [LARGE SCALE ANALYSIS] AT SER-237; THR-238; SER-243; SER-261; SER-623; SER-646; SER-649; SER-652 AND SER-1087</scope>
    <scope>IDENTIFICATION BY MASS SPECTROMETRY [LARGE SCALE ANALYSIS]</scope>
    <source>
        <tissue>Brain</tissue>
        <tissue>Brown adipose tissue</tissue>
        <tissue>Kidney</tissue>
        <tissue>Lung</tissue>
        <tissue>Pancreas</tissue>
        <tissue>Spleen</tissue>
        <tissue>Testis</tissue>
    </source>
</reference>
<reference key="12">
    <citation type="journal article" date="2010" name="J. Biol. Chem.">
        <title>Neural-specific deletion of FIP200 leads to cerebellar degeneration caused by increased neuronal death and axon degeneration.</title>
        <authorList>
            <person name="Liang C.C."/>
            <person name="Wang C."/>
            <person name="Peng X."/>
            <person name="Gan B."/>
            <person name="Guan J.L."/>
        </authorList>
    </citation>
    <scope>FUNCTION</scope>
</reference>
<reference key="13">
    <citation type="journal article" date="2011" name="Autophagy">
        <title>FIP200, an essential component of mammalian autophagy is indispensible for fetal hematopoiesis.</title>
        <authorList>
            <person name="Liu F."/>
            <person name="Guan J.L."/>
        </authorList>
    </citation>
    <scope>FUNCTION</scope>
</reference>
<reference key="14">
    <citation type="journal article" date="2011" name="J. Biol. Chem.">
        <title>RB1CC1 protein positively regulates transforming growth factor-beta signaling through the modulation of Arkadia E3 ubiquitin ligase activity.</title>
        <authorList>
            <person name="Koinuma D."/>
            <person name="Shinozaki M."/>
            <person name="Nagano Y."/>
            <person name="Ikushima H."/>
            <person name="Horiguchi K."/>
            <person name="Goto K."/>
            <person name="Chano T."/>
            <person name="Saitoh M."/>
            <person name="Imamura T."/>
            <person name="Miyazono K."/>
            <person name="Miyazawa K."/>
        </authorList>
    </citation>
    <scope>FUNCTION</scope>
    <scope>INTERACTION WITH RNF111; SKI AND SMAD7</scope>
</reference>
<reference key="15">
    <citation type="journal article" date="2011" name="Mol. Biol. Cell">
        <title>The LC3 recruitment mechanism is separate from Atg9L1-dependent membrane formation in the autophagic response against Salmonella.</title>
        <authorList>
            <person name="Kageyama S."/>
            <person name="Omori H."/>
            <person name="Saitoh T."/>
            <person name="Sone T."/>
            <person name="Guan J.L."/>
            <person name="Akira S."/>
            <person name="Imamoto F."/>
            <person name="Noda T."/>
            <person name="Yoshimori T."/>
        </authorList>
    </citation>
    <scope>FUNCTION</scope>
</reference>
<reference key="16">
    <citation type="journal article" date="2011" name="Mol. Cancer Res.">
        <title>Suppression of autophagy by FIP200 deletion impairs DNA damage repair and increases cell death upon treatments with anticancer agents.</title>
        <authorList>
            <person name="Bae H."/>
            <person name="Guan J.L."/>
        </authorList>
    </citation>
    <scope>FUNCTION</scope>
</reference>
<reference key="17">
    <citation type="journal article" date="2012" name="PLoS ONE">
        <title>Autophagy induced by calcium phosphate precipitates involves endoplasmic reticulum membranes in autophagosome biogenesis.</title>
        <authorList>
            <person name="Chen X."/>
            <person name="Li M."/>
            <person name="Chen D."/>
            <person name="Gao W."/>
            <person name="Guan J.L."/>
            <person name="Komatsu M."/>
            <person name="Yin X.M."/>
        </authorList>
    </citation>
    <scope>FUNCTION</scope>
</reference>
<reference key="18">
    <citation type="journal article" date="2013" name="EMBO Rep.">
        <title>FIP200 regulates targeting of Atg16L1 to the isolation membrane.</title>
        <authorList>
            <person name="Nishimura T."/>
            <person name="Kaizuka T."/>
            <person name="Cadwell K."/>
            <person name="Sahani M.H."/>
            <person name="Saitoh T."/>
            <person name="Akira S."/>
            <person name="Virgin H.W."/>
            <person name="Mizushima N."/>
        </authorList>
    </citation>
    <scope>FUNCTION</scope>
    <scope>INTERACTION WITH ATG16L1</scope>
</reference>
<reference key="19">
    <citation type="journal article" date="2013" name="Nat. Struct. Mol. Biol.">
        <title>Interaction between FIP200 and ATG16L1 distinguishes ULK1 complex-dependent and -independent autophagy.</title>
        <authorList>
            <person name="Gammoh N."/>
            <person name="Florey O."/>
            <person name="Overholtzer M."/>
            <person name="Jiang X."/>
        </authorList>
    </citation>
    <scope>FUNCTION</scope>
    <scope>INTERACTION WITH ATG16L1</scope>
</reference>
<reference key="20">
    <citation type="journal article" date="2017" name="Nat. Commun.">
        <title>WIPI3 and WIPI4 beta-propellers are scaffolds for LKB1-AMPK-TSC signalling circuits in the control of autophagy.</title>
        <authorList>
            <person name="Bakula D."/>
            <person name="Mueller A.J."/>
            <person name="Zuleger T."/>
            <person name="Takacs Z."/>
            <person name="Franz-Wachtel M."/>
            <person name="Thost A.K."/>
            <person name="Brigger D."/>
            <person name="Tschan M.P."/>
            <person name="Frickey T."/>
            <person name="Robenek H."/>
            <person name="Macek B."/>
            <person name="Proikas-Cezanne T."/>
        </authorList>
    </citation>
    <scope>INTERACTION WITH WDR45B</scope>
</reference>
<comment type="function">
    <text evidence="1 4 6 7 8 9 10 11 12 13 14 15">Involved in autophagy (PubMed:19258318, PubMed:23262492). Regulates early events but also late events of autophagosome formation through direct interaction with Atg16L1 (PubMed:19258318, PubMed:23285000, PubMed:23392225). Required for the formation of the autophagosome-like double-membrane structure that surrounds the Salmonella-containing vacuole (SCV) during S.typhimurium infection and subsequent xenophagy (PubMed:21525242). Involved in repair of DNA damage caused by ionizing radiation, which subsequently improves cell survival by decreasing apoptosis (PubMed:21807966). Inhibits PTK2/FAK1 and PTK2B/PYK2 kinase activity, affecting their downstream signaling pathways (By similarity). Plays a role as a modulator of TGF-beta-signaling by restricting substrate specificity of RNF111 (PubMed:21795712). Functions as a DNA-binding transcription factor (PubMed:12095676). Is a potent regulator of the RB1 pathway through induction of RB1 expression (PubMed:15968549). Plays a crucial role in muscular differentiation (PubMed:15968549). Plays an indispensable role in fetal hematopoiesis and in the regulation of neuronal homeostasis (PubMed:19940130, PubMed:21088496).</text>
</comment>
<comment type="subunit">
    <text evidence="1 7 11 13 15 16">Part of a complex containing ATG13/KIAA0652, ULK1 and RB1CC1 (PubMed:19258318). This complex associates with ATG101 (By similarity). Interacts with PTK2/FAK1 and PTK2B/PYK2 (By similarity). Interacts with GABARAP and GABARAPL1 (By similarity). Interacts with ATG16L1; the interaction is required for ULK1 complex-dependent autophagy (PubMed:23262492, PubMed:23392225). Interacts with RNF111, SKI and SMAD7 (PubMed:21795712). Interacts with COP1 in the cytoplasm of proliferating cells in response to UV stimulation (By similarity). Interacts with TP53 (By similarity). Interacts with C9orf72 (By similarity). Interacts with WDR45B (PubMed:28561066). Interacts with ATG13; this interaction is increased in the absence of TMEM39A (By similarity). Interacts with WIPI2 (By similarity). Interacts with TAX1BP1 (By similarity). Interacts (via phosphorylated FFAT motif) with MOSPD2 (By similarity).</text>
</comment>
<comment type="interaction">
    <interactant intactId="EBI-647302">
        <id>Q9ESK9</id>
    </interactant>
    <interactant intactId="EBI-769195">
        <id>Q8C0J2</id>
        <label>Atg16l1</label>
    </interactant>
    <organismsDiffer>false</organismsDiffer>
    <experiments>4</experiments>
</comment>
<comment type="interaction">
    <interactant intactId="EBI-647302">
        <id>Q9ESK9</id>
    </interactant>
    <interactant intactId="EBI-16029274">
        <id>Q8C0J2-3</id>
        <label>Atg16l1</label>
    </interactant>
    <organismsDiffer>false</organismsDiffer>
    <experiments>3</experiments>
</comment>
<comment type="subcellular location">
    <subcellularLocation>
        <location evidence="4">Nucleus</location>
    </subcellularLocation>
    <subcellularLocation>
        <location evidence="7">Cytoplasm</location>
        <location evidence="7">Cytosol</location>
    </subcellularLocation>
    <subcellularLocation>
        <location evidence="1">Cytoplasm</location>
    </subcellularLocation>
    <subcellularLocation>
        <location evidence="7">Preautophagosomal structure</location>
    </subcellularLocation>
    <subcellularLocation>
        <location evidence="1">Lysosome</location>
    </subcellularLocation>
    <text evidence="7">Under starvation conditions, is localized to puncate structures primarily representing the isolation membrane that sequesters a portion of the cytoplasm resulting in the formation of an autophagosome.</text>
</comment>
<comment type="tissue specificity">
    <text evidence="4">Expressed abundantly in heart and testis, and moderately in kidney, liver and skeletal muscles. Very low expression levels in lung and spleen. Colocalizes with RB1 in various tissues.</text>
</comment>
<comment type="developmental stage">
    <text evidence="5">Abundantly expressed from an early stage of the embryo throughout development. Ubiquitously expressed, especially in the musculoskeletal system, heart and neural tissues.</text>
</comment>
<comment type="domain">
    <text evidence="1">The FFAT motif is involved in the interaction with MOSPD2 and its phosphorylation regulates this interaction.</text>
</comment>
<comment type="PTM">
    <text evidence="1">Phosphorylation at Ser-733 of the FFAT motif activates interaction with MOSPD2.</text>
</comment>
<comment type="sequence caution" evidence="17">
    <conflict type="erroneous initiation">
        <sequence resource="EMBL-CDS" id="BAC30793"/>
    </conflict>
    <text>Truncated N-terminus.</text>
</comment>
<sequence length="1588" mass="182350">MKLYVFLVNTGTTLTFDTELTVQTVADLKHAIQSKYKIAIQHQVLVVNGGECMAADRRVCTYSAGTDTNPIFLFNKEMILCDRAPAIPKATFSTENDMEIKVEESLMMPAVFHTVASRTQLAVEMYDVAKKLCSFCEGLVHDEHLQHQGWAAIMANLEDCSNSYQKLLFKFESIYSDYLQSIEDIKLKLTHLGTAVSVMAKIPLLECLTRHSYRECLGRPDSLNEHEGSEKAEMKRSTELVLSPDMPRTTNTSLVTSFHKSMEHVAPDPTGTERGKELRESCQSTVQQEEASVDAKDSDLPFFNVSLLDWINVQDRPNDVESLVRKCFDSMSRLDPKIIQPFMLECHQTIAKLDNQNMKAIKGLEDRLYALDQMIASCSRLVNEQKELAQGFLANQMRAENLKDASVLPDLCLSHANQLMIMLQNHRKLLDIKQKCTTAKQELANNLHVRLKWCCFVMLHADQDGEKLQALLRLVIELLERVRIVEALSTVPQMYCLAVVEVVRRKMFIKHYREWAGALVKDGKQLYEAEKSKRESFGKLFRKSFLRNRLFKGLDSWPSSFCTQKPRKFDCELPDISLKDLQFLQSFCPSEVQPFLRVPLLCDFEPLHQHVLALHNLVKAAQSLDEMSQTITDLLNEQKVSTSQASPQSAASPRIESTTGITTTTSPKTPPPLTVQDTLCPAVCPLEELSPDSIDAHTFDFETISHPNTEQPVHQASIDLDSLAESPESDFMSAVNEFVIEENLSSPNPISDPQSPEMMVESLYSSVINAIDSRRMQDTSTRGNEGFGDRAALHVQLEKCRAAAQDSHSSIQTIKDDLCHFRTFVQKEQCDLANYLKCTAVEIRNIIEKVKCSLEITLKEKHQQELQSLKIEYECKLDALVKDSEENVNKILKLKENLVSLEEALQNKDNEFTSIKHEKDAIVCVQQEKDQKLLEMEKIMHTQHCEIKELKQSREMALEDLKKLHDEKIESLRAEFQCLEQNHLKELEDTLHIRHTQEFEKVMTDHNMSLEKLKKENQQRIDQMLESHASTIQEKEQQLQELKLKVSDLSDMRCKLEVELALKEAETDEIKILLEESRTQQKEMLKSLLEQETENLRTEISKLNQKIHDNNESYQVGLSELRALMTIEKDQCISELISRHEEESNILKAELDNVTSLHRQAYEIEKKLKEQIVELQTRLNSELSALEKQKDEKITQQEEKYEALIQNLEKDKERLVKNHEQDKEHLIQELNFEKNKAVQTALDEFKVERELVEKELLEKVKHLENQIAKTPAFESAREDSSSLVAELQEKLQEEKAKFLEQLEEQEKRKNEEMQNVRTSLIAEQQTNFNTVLTREKMRKENIINDLSDKLKSTMQQQERDKDLIESLSEDRARLLEEKKQLEEEVSKLRTSSFLSSAPVAAAPELYGACAPELPGEPERSVMETADEGRLDSAMETSMMSVQENMLSEEKQRIMLLERTLQLKEEENKRLNQRLMSQSLSSVSSRHSEKIAIRDFQVGDLVLIILDERHDNYVLFTVSPTLYFLHSESLPALDLKPGEGASGASRRPWVLGKVMEKEYCQAKKAQNRFKVPLGTKFYRVKAVSWNKKV</sequence>
<proteinExistence type="evidence at protein level"/>
<organism>
    <name type="scientific">Mus musculus</name>
    <name type="common">Mouse</name>
    <dbReference type="NCBI Taxonomy" id="10090"/>
    <lineage>
        <taxon>Eukaryota</taxon>
        <taxon>Metazoa</taxon>
        <taxon>Chordata</taxon>
        <taxon>Craniata</taxon>
        <taxon>Vertebrata</taxon>
        <taxon>Euteleostomi</taxon>
        <taxon>Mammalia</taxon>
        <taxon>Eutheria</taxon>
        <taxon>Euarchontoglires</taxon>
        <taxon>Glires</taxon>
        <taxon>Rodentia</taxon>
        <taxon>Myomorpha</taxon>
        <taxon>Muroidea</taxon>
        <taxon>Muridae</taxon>
        <taxon>Murinae</taxon>
        <taxon>Mus</taxon>
        <taxon>Mus</taxon>
    </lineage>
</organism>
<keyword id="KW-0072">Autophagy</keyword>
<keyword id="KW-0131">Cell cycle</keyword>
<keyword id="KW-0175">Coiled coil</keyword>
<keyword id="KW-0963">Cytoplasm</keyword>
<keyword id="KW-0458">Lysosome</keyword>
<keyword id="KW-0539">Nucleus</keyword>
<keyword id="KW-0597">Phosphoprotein</keyword>
<keyword id="KW-1185">Reference proteome</keyword>
<keyword id="KW-0804">Transcription</keyword>
<keyword id="KW-0805">Transcription regulation</keyword>
<keyword id="KW-0043">Tumor suppressor</keyword>
<protein>
    <recommendedName>
        <fullName evidence="17">RB1-inducible coiled-coil protein 1</fullName>
    </recommendedName>
    <alternativeName>
        <fullName>Coiled-coil-forming protein 1</fullName>
    </alternativeName>
    <alternativeName>
        <fullName>FAK family kinase-interacting protein of 200 kDa</fullName>
        <shortName>FIP200</shortName>
    </alternativeName>
    <alternativeName>
        <fullName>LaXp180</fullName>
    </alternativeName>
</protein>